<proteinExistence type="inferred from homology"/>
<dbReference type="EC" id="6.1.1.20" evidence="1"/>
<dbReference type="EMBL" id="BX640418">
    <property type="protein sequence ID" value="CAE42848.1"/>
    <property type="molecule type" value="Genomic_DNA"/>
</dbReference>
<dbReference type="RefSeq" id="NP_881200.1">
    <property type="nucleotide sequence ID" value="NC_002929.2"/>
</dbReference>
<dbReference type="RefSeq" id="WP_010931007.1">
    <property type="nucleotide sequence ID" value="NZ_CP039022.1"/>
</dbReference>
<dbReference type="SMR" id="Q7VVR5"/>
<dbReference type="STRING" id="257313.BP2573"/>
<dbReference type="PaxDb" id="257313-BP2573"/>
<dbReference type="GeneID" id="69602477"/>
<dbReference type="KEGG" id="bpe:BP2573"/>
<dbReference type="PATRIC" id="fig|257313.5.peg.2774"/>
<dbReference type="eggNOG" id="COG0072">
    <property type="taxonomic scope" value="Bacteria"/>
</dbReference>
<dbReference type="eggNOG" id="COG0073">
    <property type="taxonomic scope" value="Bacteria"/>
</dbReference>
<dbReference type="HOGENOM" id="CLU_016891_0_0_4"/>
<dbReference type="Proteomes" id="UP000002676">
    <property type="component" value="Chromosome"/>
</dbReference>
<dbReference type="GO" id="GO:0009328">
    <property type="term" value="C:phenylalanine-tRNA ligase complex"/>
    <property type="evidence" value="ECO:0007669"/>
    <property type="project" value="TreeGrafter"/>
</dbReference>
<dbReference type="GO" id="GO:0005524">
    <property type="term" value="F:ATP binding"/>
    <property type="evidence" value="ECO:0007669"/>
    <property type="project" value="UniProtKB-UniRule"/>
</dbReference>
<dbReference type="GO" id="GO:0000287">
    <property type="term" value="F:magnesium ion binding"/>
    <property type="evidence" value="ECO:0007669"/>
    <property type="project" value="UniProtKB-UniRule"/>
</dbReference>
<dbReference type="GO" id="GO:0004826">
    <property type="term" value="F:phenylalanine-tRNA ligase activity"/>
    <property type="evidence" value="ECO:0007669"/>
    <property type="project" value="UniProtKB-UniRule"/>
</dbReference>
<dbReference type="GO" id="GO:0000049">
    <property type="term" value="F:tRNA binding"/>
    <property type="evidence" value="ECO:0007669"/>
    <property type="project" value="UniProtKB-KW"/>
</dbReference>
<dbReference type="GO" id="GO:0006432">
    <property type="term" value="P:phenylalanyl-tRNA aminoacylation"/>
    <property type="evidence" value="ECO:0007669"/>
    <property type="project" value="UniProtKB-UniRule"/>
</dbReference>
<dbReference type="CDD" id="cd00769">
    <property type="entry name" value="PheRS_beta_core"/>
    <property type="match status" value="1"/>
</dbReference>
<dbReference type="CDD" id="cd02796">
    <property type="entry name" value="tRNA_bind_bactPheRS"/>
    <property type="match status" value="1"/>
</dbReference>
<dbReference type="FunFam" id="2.40.50.140:FF:000045">
    <property type="entry name" value="Phenylalanine--tRNA ligase beta subunit"/>
    <property type="match status" value="1"/>
</dbReference>
<dbReference type="FunFam" id="3.30.56.10:FF:000002">
    <property type="entry name" value="Phenylalanine--tRNA ligase beta subunit"/>
    <property type="match status" value="1"/>
</dbReference>
<dbReference type="FunFam" id="3.30.930.10:FF:000022">
    <property type="entry name" value="Phenylalanine--tRNA ligase beta subunit"/>
    <property type="match status" value="1"/>
</dbReference>
<dbReference type="Gene3D" id="3.30.56.10">
    <property type="match status" value="2"/>
</dbReference>
<dbReference type="Gene3D" id="3.30.930.10">
    <property type="entry name" value="Bira Bifunctional Protein, Domain 2"/>
    <property type="match status" value="1"/>
</dbReference>
<dbReference type="Gene3D" id="3.30.70.380">
    <property type="entry name" value="Ferrodoxin-fold anticodon-binding domain"/>
    <property type="match status" value="1"/>
</dbReference>
<dbReference type="Gene3D" id="2.40.50.140">
    <property type="entry name" value="Nucleic acid-binding proteins"/>
    <property type="match status" value="1"/>
</dbReference>
<dbReference type="Gene3D" id="3.50.40.10">
    <property type="entry name" value="Phenylalanyl-trna Synthetase, Chain B, domain 3"/>
    <property type="match status" value="1"/>
</dbReference>
<dbReference type="HAMAP" id="MF_00283">
    <property type="entry name" value="Phe_tRNA_synth_beta1"/>
    <property type="match status" value="1"/>
</dbReference>
<dbReference type="InterPro" id="IPR045864">
    <property type="entry name" value="aa-tRNA-synth_II/BPL/LPL"/>
</dbReference>
<dbReference type="InterPro" id="IPR005146">
    <property type="entry name" value="B3/B4_tRNA-bd"/>
</dbReference>
<dbReference type="InterPro" id="IPR009061">
    <property type="entry name" value="DNA-bd_dom_put_sf"/>
</dbReference>
<dbReference type="InterPro" id="IPR005121">
    <property type="entry name" value="Fdx_antiC-bd"/>
</dbReference>
<dbReference type="InterPro" id="IPR036690">
    <property type="entry name" value="Fdx_antiC-bd_sf"/>
</dbReference>
<dbReference type="InterPro" id="IPR012340">
    <property type="entry name" value="NA-bd_OB-fold"/>
</dbReference>
<dbReference type="InterPro" id="IPR045060">
    <property type="entry name" value="Phe-tRNA-ligase_IIc_bsu"/>
</dbReference>
<dbReference type="InterPro" id="IPR004532">
    <property type="entry name" value="Phe-tRNA-ligase_IIc_bsu_bact"/>
</dbReference>
<dbReference type="InterPro" id="IPR020825">
    <property type="entry name" value="Phe-tRNA_synthase-like_B3/B4"/>
</dbReference>
<dbReference type="InterPro" id="IPR041616">
    <property type="entry name" value="PheRS_beta_core"/>
</dbReference>
<dbReference type="InterPro" id="IPR002547">
    <property type="entry name" value="tRNA-bd_dom"/>
</dbReference>
<dbReference type="InterPro" id="IPR033714">
    <property type="entry name" value="tRNA_bind_bactPheRS"/>
</dbReference>
<dbReference type="InterPro" id="IPR005147">
    <property type="entry name" value="tRNA_synthase_B5-dom"/>
</dbReference>
<dbReference type="NCBIfam" id="TIGR00472">
    <property type="entry name" value="pheT_bact"/>
    <property type="match status" value="1"/>
</dbReference>
<dbReference type="NCBIfam" id="NF045760">
    <property type="entry name" value="YtpR"/>
    <property type="match status" value="1"/>
</dbReference>
<dbReference type="PANTHER" id="PTHR10947:SF0">
    <property type="entry name" value="PHENYLALANINE--TRNA LIGASE BETA SUBUNIT"/>
    <property type="match status" value="1"/>
</dbReference>
<dbReference type="PANTHER" id="PTHR10947">
    <property type="entry name" value="PHENYLALANYL-TRNA SYNTHETASE BETA CHAIN AND LEUCINE-RICH REPEAT-CONTAINING PROTEIN 47"/>
    <property type="match status" value="1"/>
</dbReference>
<dbReference type="Pfam" id="PF03483">
    <property type="entry name" value="B3_4"/>
    <property type="match status" value="1"/>
</dbReference>
<dbReference type="Pfam" id="PF03484">
    <property type="entry name" value="B5"/>
    <property type="match status" value="1"/>
</dbReference>
<dbReference type="Pfam" id="PF03147">
    <property type="entry name" value="FDX-ACB"/>
    <property type="match status" value="1"/>
</dbReference>
<dbReference type="Pfam" id="PF01588">
    <property type="entry name" value="tRNA_bind"/>
    <property type="match status" value="1"/>
</dbReference>
<dbReference type="Pfam" id="PF17759">
    <property type="entry name" value="tRNA_synthFbeta"/>
    <property type="match status" value="1"/>
</dbReference>
<dbReference type="SMART" id="SM00873">
    <property type="entry name" value="B3_4"/>
    <property type="match status" value="1"/>
</dbReference>
<dbReference type="SMART" id="SM00874">
    <property type="entry name" value="B5"/>
    <property type="match status" value="1"/>
</dbReference>
<dbReference type="SMART" id="SM00896">
    <property type="entry name" value="FDX-ACB"/>
    <property type="match status" value="1"/>
</dbReference>
<dbReference type="SUPFAM" id="SSF54991">
    <property type="entry name" value="Anticodon-binding domain of PheRS"/>
    <property type="match status" value="1"/>
</dbReference>
<dbReference type="SUPFAM" id="SSF55681">
    <property type="entry name" value="Class II aaRS and biotin synthetases"/>
    <property type="match status" value="1"/>
</dbReference>
<dbReference type="SUPFAM" id="SSF50249">
    <property type="entry name" value="Nucleic acid-binding proteins"/>
    <property type="match status" value="1"/>
</dbReference>
<dbReference type="SUPFAM" id="SSF56037">
    <property type="entry name" value="PheT/TilS domain"/>
    <property type="match status" value="1"/>
</dbReference>
<dbReference type="SUPFAM" id="SSF46955">
    <property type="entry name" value="Putative DNA-binding domain"/>
    <property type="match status" value="1"/>
</dbReference>
<dbReference type="PROSITE" id="PS51483">
    <property type="entry name" value="B5"/>
    <property type="match status" value="1"/>
</dbReference>
<dbReference type="PROSITE" id="PS51447">
    <property type="entry name" value="FDX_ACB"/>
    <property type="match status" value="1"/>
</dbReference>
<dbReference type="PROSITE" id="PS50886">
    <property type="entry name" value="TRBD"/>
    <property type="match status" value="1"/>
</dbReference>
<protein>
    <recommendedName>
        <fullName evidence="1">Phenylalanine--tRNA ligase beta subunit</fullName>
        <ecNumber evidence="1">6.1.1.20</ecNumber>
    </recommendedName>
    <alternativeName>
        <fullName evidence="1">Phenylalanyl-tRNA synthetase beta subunit</fullName>
        <shortName evidence="1">PheRS</shortName>
    </alternativeName>
</protein>
<name>SYFB_BORPE</name>
<reference key="1">
    <citation type="journal article" date="2003" name="Nat. Genet.">
        <title>Comparative analysis of the genome sequences of Bordetella pertussis, Bordetella parapertussis and Bordetella bronchiseptica.</title>
        <authorList>
            <person name="Parkhill J."/>
            <person name="Sebaihia M."/>
            <person name="Preston A."/>
            <person name="Murphy L.D."/>
            <person name="Thomson N.R."/>
            <person name="Harris D.E."/>
            <person name="Holden M.T.G."/>
            <person name="Churcher C.M."/>
            <person name="Bentley S.D."/>
            <person name="Mungall K.L."/>
            <person name="Cerdeno-Tarraga A.-M."/>
            <person name="Temple L."/>
            <person name="James K.D."/>
            <person name="Harris B."/>
            <person name="Quail M.A."/>
            <person name="Achtman M."/>
            <person name="Atkin R."/>
            <person name="Baker S."/>
            <person name="Basham D."/>
            <person name="Bason N."/>
            <person name="Cherevach I."/>
            <person name="Chillingworth T."/>
            <person name="Collins M."/>
            <person name="Cronin A."/>
            <person name="Davis P."/>
            <person name="Doggett J."/>
            <person name="Feltwell T."/>
            <person name="Goble A."/>
            <person name="Hamlin N."/>
            <person name="Hauser H."/>
            <person name="Holroyd S."/>
            <person name="Jagels K."/>
            <person name="Leather S."/>
            <person name="Moule S."/>
            <person name="Norberczak H."/>
            <person name="O'Neil S."/>
            <person name="Ormond D."/>
            <person name="Price C."/>
            <person name="Rabbinowitsch E."/>
            <person name="Rutter S."/>
            <person name="Sanders M."/>
            <person name="Saunders D."/>
            <person name="Seeger K."/>
            <person name="Sharp S."/>
            <person name="Simmonds M."/>
            <person name="Skelton J."/>
            <person name="Squares R."/>
            <person name="Squares S."/>
            <person name="Stevens K."/>
            <person name="Unwin L."/>
            <person name="Whitehead S."/>
            <person name="Barrell B.G."/>
            <person name="Maskell D.J."/>
        </authorList>
    </citation>
    <scope>NUCLEOTIDE SEQUENCE [LARGE SCALE GENOMIC DNA]</scope>
    <source>
        <strain>Tohama I / ATCC BAA-589 / NCTC 13251</strain>
    </source>
</reference>
<feature type="chain" id="PRO_0000126852" description="Phenylalanine--tRNA ligase beta subunit">
    <location>
        <begin position="1"/>
        <end position="805"/>
    </location>
</feature>
<feature type="domain" description="tRNA-binding" evidence="1">
    <location>
        <begin position="39"/>
        <end position="148"/>
    </location>
</feature>
<feature type="domain" description="B5" evidence="1">
    <location>
        <begin position="399"/>
        <end position="474"/>
    </location>
</feature>
<feature type="domain" description="FDX-ACB" evidence="1">
    <location>
        <begin position="703"/>
        <end position="804"/>
    </location>
</feature>
<feature type="binding site" evidence="1">
    <location>
        <position position="452"/>
    </location>
    <ligand>
        <name>Mg(2+)</name>
        <dbReference type="ChEBI" id="CHEBI:18420"/>
        <note>shared with alpha subunit</note>
    </ligand>
</feature>
<feature type="binding site" evidence="1">
    <location>
        <position position="458"/>
    </location>
    <ligand>
        <name>Mg(2+)</name>
        <dbReference type="ChEBI" id="CHEBI:18420"/>
        <note>shared with alpha subunit</note>
    </ligand>
</feature>
<feature type="binding site" evidence="1">
    <location>
        <position position="461"/>
    </location>
    <ligand>
        <name>Mg(2+)</name>
        <dbReference type="ChEBI" id="CHEBI:18420"/>
        <note>shared with alpha subunit</note>
    </ligand>
</feature>
<feature type="binding site" evidence="1">
    <location>
        <position position="462"/>
    </location>
    <ligand>
        <name>Mg(2+)</name>
        <dbReference type="ChEBI" id="CHEBI:18420"/>
        <note>shared with alpha subunit</note>
    </ligand>
</feature>
<comment type="catalytic activity">
    <reaction evidence="1">
        <text>tRNA(Phe) + L-phenylalanine + ATP = L-phenylalanyl-tRNA(Phe) + AMP + diphosphate + H(+)</text>
        <dbReference type="Rhea" id="RHEA:19413"/>
        <dbReference type="Rhea" id="RHEA-COMP:9668"/>
        <dbReference type="Rhea" id="RHEA-COMP:9699"/>
        <dbReference type="ChEBI" id="CHEBI:15378"/>
        <dbReference type="ChEBI" id="CHEBI:30616"/>
        <dbReference type="ChEBI" id="CHEBI:33019"/>
        <dbReference type="ChEBI" id="CHEBI:58095"/>
        <dbReference type="ChEBI" id="CHEBI:78442"/>
        <dbReference type="ChEBI" id="CHEBI:78531"/>
        <dbReference type="ChEBI" id="CHEBI:456215"/>
        <dbReference type="EC" id="6.1.1.20"/>
    </reaction>
</comment>
<comment type="cofactor">
    <cofactor evidence="1">
        <name>Mg(2+)</name>
        <dbReference type="ChEBI" id="CHEBI:18420"/>
    </cofactor>
    <text evidence="1">Binds 2 magnesium ions per tetramer.</text>
</comment>
<comment type="subunit">
    <text evidence="1">Tetramer of two alpha and two beta subunits.</text>
</comment>
<comment type="subcellular location">
    <subcellularLocation>
        <location evidence="1">Cytoplasm</location>
    </subcellularLocation>
</comment>
<comment type="similarity">
    <text evidence="1">Belongs to the phenylalanyl-tRNA synthetase beta subunit family. Type 1 subfamily.</text>
</comment>
<keyword id="KW-0030">Aminoacyl-tRNA synthetase</keyword>
<keyword id="KW-0067">ATP-binding</keyword>
<keyword id="KW-0963">Cytoplasm</keyword>
<keyword id="KW-0436">Ligase</keyword>
<keyword id="KW-0460">Magnesium</keyword>
<keyword id="KW-0479">Metal-binding</keyword>
<keyword id="KW-0547">Nucleotide-binding</keyword>
<keyword id="KW-0648">Protein biosynthesis</keyword>
<keyword id="KW-1185">Reference proteome</keyword>
<keyword id="KW-0694">RNA-binding</keyword>
<keyword id="KW-0820">tRNA-binding</keyword>
<sequence>MQFPESWLRSLVNPSIGTDELAHRLTMAGLEVEETEPAAPPFTGVVVTRIVDIAPHPDADKLRVCQVDDGSGALLQIVCGAPNAAAGLTVPLARVGAELPGGMKIGVAKMRGVQSSGMLCSARELGLSQDHAGLLELPAALRPGTDIRAALDLDDTLFTLKLTPNRADCLSILGVAREVAALTGTPLTAPAAEPVPVTIDHRLPVAIQAPDLCGRFAGRVIQGVNARAATPEWMKTRLERAGQRSVSALVDISNYVMLEVGRPSHVFDLDKIGGDLSVRWAREGETLELLNGQAVALDPKVGVVVAGEQVESLAGIMGGEATSVTLDTRNIYLEAAFWWPGAIAGRARRYKFSSEASHRFERGVDYASIPEHIELITRLILDICGGQAGPVDDQCVNLPVREPVRMRLARCHRVLGVAVERAEVAQIFTRLGLPFQEQGDDFVVTPPSYRFDIEIEEDLIEEVARVYGFERIPDVPPVARAKMHAQPEARRGAHAVRRLVAARDYQEVVNYSFVEAAWERDYAGNDNPVRLVNPIASHLSVMRSSLIAGLVAIVRHNANRKQSRMRLFELGRVFHRDPQLADGPLEVAGVRQPLMLAGVAWGGAVEEQWGVPHRQVDFYDVKQDIEALFGARADALRFVADRYPALHPGRSARIELDGQPIGWLGELHPQWTQQADLHHAPVVFELDFEALAERRLPAVRKLSRQPVVVRDLALWVDAKLPAQAMLDTVAAAIARDPQLSVVQDAQVFDVWREKPVAGQTVTEKSLAFRFWLQDTEVTLDEARVADCIARIKDALVAAHNARQRA</sequence>
<accession>Q7VVR5</accession>
<gene>
    <name evidence="1" type="primary">pheT</name>
    <name type="ordered locus">BP2573</name>
</gene>
<organism>
    <name type="scientific">Bordetella pertussis (strain Tohama I / ATCC BAA-589 / NCTC 13251)</name>
    <dbReference type="NCBI Taxonomy" id="257313"/>
    <lineage>
        <taxon>Bacteria</taxon>
        <taxon>Pseudomonadati</taxon>
        <taxon>Pseudomonadota</taxon>
        <taxon>Betaproteobacteria</taxon>
        <taxon>Burkholderiales</taxon>
        <taxon>Alcaligenaceae</taxon>
        <taxon>Bordetella</taxon>
    </lineage>
</organism>
<evidence type="ECO:0000255" key="1">
    <source>
        <dbReference type="HAMAP-Rule" id="MF_00283"/>
    </source>
</evidence>